<name>NUOB_CHLL3</name>
<accession>Q3B4W2</accession>
<reference key="1">
    <citation type="submission" date="2005-08" db="EMBL/GenBank/DDBJ databases">
        <title>Complete sequence of Pelodictyon luteolum DSM 273.</title>
        <authorList>
            <consortium name="US DOE Joint Genome Institute"/>
            <person name="Copeland A."/>
            <person name="Lucas S."/>
            <person name="Lapidus A."/>
            <person name="Barry K."/>
            <person name="Detter J.C."/>
            <person name="Glavina T."/>
            <person name="Hammon N."/>
            <person name="Israni S."/>
            <person name="Pitluck S."/>
            <person name="Bryant D."/>
            <person name="Schmutz J."/>
            <person name="Larimer F."/>
            <person name="Land M."/>
            <person name="Kyrpides N."/>
            <person name="Ivanova N."/>
            <person name="Richardson P."/>
        </authorList>
    </citation>
    <scope>NUCLEOTIDE SEQUENCE [LARGE SCALE GENOMIC DNA]</scope>
    <source>
        <strain>DSM 273 / BCRC 81028 / 2530</strain>
    </source>
</reference>
<organism>
    <name type="scientific">Chlorobium luteolum (strain DSM 273 / BCRC 81028 / 2530)</name>
    <name type="common">Pelodictyon luteolum</name>
    <dbReference type="NCBI Taxonomy" id="319225"/>
    <lineage>
        <taxon>Bacteria</taxon>
        <taxon>Pseudomonadati</taxon>
        <taxon>Chlorobiota</taxon>
        <taxon>Chlorobiia</taxon>
        <taxon>Chlorobiales</taxon>
        <taxon>Chlorobiaceae</taxon>
        <taxon>Chlorobium/Pelodictyon group</taxon>
        <taxon>Pelodictyon</taxon>
    </lineage>
</organism>
<protein>
    <recommendedName>
        <fullName evidence="1">NADH-quinone oxidoreductase subunit B</fullName>
        <ecNumber evidence="1">7.1.1.-</ecNumber>
    </recommendedName>
    <alternativeName>
        <fullName evidence="1">NADH dehydrogenase I subunit B</fullName>
    </alternativeName>
    <alternativeName>
        <fullName evidence="1">NDH-1 subunit B</fullName>
    </alternativeName>
</protein>
<evidence type="ECO:0000255" key="1">
    <source>
        <dbReference type="HAMAP-Rule" id="MF_01356"/>
    </source>
</evidence>
<sequence>MGLLDAGFSRDNVLVAPVDAVLNWARLSSLWPMGFGLACCAIEMMATNASNYDLERFGIFPRSSPRQSDLMIVAGTVSMKMAERVVRLYEQMPEPRYVLSMGSCSNCGGPYWEHGYHVLKGVDRVIPVDVYVPGCPPRPEALIGGLMKVQELIRMEQIGMSRQEALKKLAETGVEPRPFIERERSSAGA</sequence>
<feature type="chain" id="PRO_0000376299" description="NADH-quinone oxidoreductase subunit B">
    <location>
        <begin position="1"/>
        <end position="189"/>
    </location>
</feature>
<feature type="binding site" evidence="1">
    <location>
        <position position="39"/>
    </location>
    <ligand>
        <name>[4Fe-4S] cluster</name>
        <dbReference type="ChEBI" id="CHEBI:49883"/>
    </ligand>
</feature>
<feature type="binding site" evidence="1">
    <location>
        <position position="40"/>
    </location>
    <ligand>
        <name>[4Fe-4S] cluster</name>
        <dbReference type="ChEBI" id="CHEBI:49883"/>
    </ligand>
</feature>
<feature type="binding site" evidence="1">
    <location>
        <position position="104"/>
    </location>
    <ligand>
        <name>[4Fe-4S] cluster</name>
        <dbReference type="ChEBI" id="CHEBI:49883"/>
    </ligand>
</feature>
<feature type="binding site" evidence="1">
    <location>
        <position position="135"/>
    </location>
    <ligand>
        <name>[4Fe-4S] cluster</name>
        <dbReference type="ChEBI" id="CHEBI:49883"/>
    </ligand>
</feature>
<gene>
    <name evidence="1" type="primary">nuoB</name>
    <name type="ordered locus">Plut_0744</name>
</gene>
<keyword id="KW-0004">4Fe-4S</keyword>
<keyword id="KW-0997">Cell inner membrane</keyword>
<keyword id="KW-1003">Cell membrane</keyword>
<keyword id="KW-0408">Iron</keyword>
<keyword id="KW-0411">Iron-sulfur</keyword>
<keyword id="KW-0472">Membrane</keyword>
<keyword id="KW-0479">Metal-binding</keyword>
<keyword id="KW-0520">NAD</keyword>
<keyword id="KW-0874">Quinone</keyword>
<keyword id="KW-1185">Reference proteome</keyword>
<keyword id="KW-1278">Translocase</keyword>
<keyword id="KW-0813">Transport</keyword>
<proteinExistence type="inferred from homology"/>
<dbReference type="EC" id="7.1.1.-" evidence="1"/>
<dbReference type="EMBL" id="CP000096">
    <property type="protein sequence ID" value="ABB23619.1"/>
    <property type="molecule type" value="Genomic_DNA"/>
</dbReference>
<dbReference type="RefSeq" id="WP_011357493.1">
    <property type="nucleotide sequence ID" value="NC_007512.1"/>
</dbReference>
<dbReference type="SMR" id="Q3B4W2"/>
<dbReference type="STRING" id="319225.Plut_0744"/>
<dbReference type="KEGG" id="plt:Plut_0744"/>
<dbReference type="eggNOG" id="COG0377">
    <property type="taxonomic scope" value="Bacteria"/>
</dbReference>
<dbReference type="HOGENOM" id="CLU_055737_7_3_10"/>
<dbReference type="OrthoDB" id="9786737at2"/>
<dbReference type="Proteomes" id="UP000002709">
    <property type="component" value="Chromosome"/>
</dbReference>
<dbReference type="GO" id="GO:0005886">
    <property type="term" value="C:plasma membrane"/>
    <property type="evidence" value="ECO:0007669"/>
    <property type="project" value="UniProtKB-SubCell"/>
</dbReference>
<dbReference type="GO" id="GO:0045271">
    <property type="term" value="C:respiratory chain complex I"/>
    <property type="evidence" value="ECO:0007669"/>
    <property type="project" value="TreeGrafter"/>
</dbReference>
<dbReference type="GO" id="GO:0051539">
    <property type="term" value="F:4 iron, 4 sulfur cluster binding"/>
    <property type="evidence" value="ECO:0007669"/>
    <property type="project" value="UniProtKB-KW"/>
</dbReference>
<dbReference type="GO" id="GO:0005506">
    <property type="term" value="F:iron ion binding"/>
    <property type="evidence" value="ECO:0007669"/>
    <property type="project" value="UniProtKB-UniRule"/>
</dbReference>
<dbReference type="GO" id="GO:0008137">
    <property type="term" value="F:NADH dehydrogenase (ubiquinone) activity"/>
    <property type="evidence" value="ECO:0007669"/>
    <property type="project" value="InterPro"/>
</dbReference>
<dbReference type="GO" id="GO:0050136">
    <property type="term" value="F:NADH:ubiquinone reductase (non-electrogenic) activity"/>
    <property type="evidence" value="ECO:0007669"/>
    <property type="project" value="UniProtKB-UniRule"/>
</dbReference>
<dbReference type="GO" id="GO:0048038">
    <property type="term" value="F:quinone binding"/>
    <property type="evidence" value="ECO:0007669"/>
    <property type="project" value="UniProtKB-KW"/>
</dbReference>
<dbReference type="GO" id="GO:0009060">
    <property type="term" value="P:aerobic respiration"/>
    <property type="evidence" value="ECO:0007669"/>
    <property type="project" value="TreeGrafter"/>
</dbReference>
<dbReference type="GO" id="GO:0015990">
    <property type="term" value="P:electron transport coupled proton transport"/>
    <property type="evidence" value="ECO:0007669"/>
    <property type="project" value="TreeGrafter"/>
</dbReference>
<dbReference type="FunFam" id="3.40.50.12280:FF:000002">
    <property type="entry name" value="NADH-quinone oxidoreductase subunit B"/>
    <property type="match status" value="1"/>
</dbReference>
<dbReference type="Gene3D" id="3.40.50.12280">
    <property type="match status" value="1"/>
</dbReference>
<dbReference type="HAMAP" id="MF_01356">
    <property type="entry name" value="NDH1_NuoB"/>
    <property type="match status" value="1"/>
</dbReference>
<dbReference type="InterPro" id="IPR006137">
    <property type="entry name" value="NADH_UbQ_OxRdtase-like_20kDa"/>
</dbReference>
<dbReference type="InterPro" id="IPR006138">
    <property type="entry name" value="NADH_UQ_OxRdtase_20Kd_su"/>
</dbReference>
<dbReference type="NCBIfam" id="TIGR01957">
    <property type="entry name" value="nuoB_fam"/>
    <property type="match status" value="1"/>
</dbReference>
<dbReference type="NCBIfam" id="NF005012">
    <property type="entry name" value="PRK06411.1"/>
    <property type="match status" value="1"/>
</dbReference>
<dbReference type="NCBIfam" id="NF011388">
    <property type="entry name" value="PRK14813.1"/>
    <property type="match status" value="1"/>
</dbReference>
<dbReference type="PANTHER" id="PTHR11995">
    <property type="entry name" value="NADH DEHYDROGENASE"/>
    <property type="match status" value="1"/>
</dbReference>
<dbReference type="PANTHER" id="PTHR11995:SF33">
    <property type="entry name" value="NADH-QUINONE OXIDOREDUCTASE SUBUNIT B 2"/>
    <property type="match status" value="1"/>
</dbReference>
<dbReference type="Pfam" id="PF01058">
    <property type="entry name" value="Oxidored_q6"/>
    <property type="match status" value="1"/>
</dbReference>
<dbReference type="SUPFAM" id="SSF56770">
    <property type="entry name" value="HydA/Nqo6-like"/>
    <property type="match status" value="1"/>
</dbReference>
<dbReference type="PROSITE" id="PS01150">
    <property type="entry name" value="COMPLEX1_20K"/>
    <property type="match status" value="1"/>
</dbReference>
<comment type="function">
    <text evidence="1">NDH-1 shuttles electrons from NADH, via FMN and iron-sulfur (Fe-S) centers, to quinones in the respiratory chain. The immediate electron acceptor for the enzyme in this species is believed to be a menaquinone. Couples the redox reaction to proton translocation (for every two electrons transferred, four hydrogen ions are translocated across the cytoplasmic membrane), and thus conserves the redox energy in a proton gradient.</text>
</comment>
<comment type="catalytic activity">
    <reaction evidence="1">
        <text>a quinone + NADH + 5 H(+)(in) = a quinol + NAD(+) + 4 H(+)(out)</text>
        <dbReference type="Rhea" id="RHEA:57888"/>
        <dbReference type="ChEBI" id="CHEBI:15378"/>
        <dbReference type="ChEBI" id="CHEBI:24646"/>
        <dbReference type="ChEBI" id="CHEBI:57540"/>
        <dbReference type="ChEBI" id="CHEBI:57945"/>
        <dbReference type="ChEBI" id="CHEBI:132124"/>
    </reaction>
</comment>
<comment type="cofactor">
    <cofactor evidence="1">
        <name>[4Fe-4S] cluster</name>
        <dbReference type="ChEBI" id="CHEBI:49883"/>
    </cofactor>
    <text evidence="1">Binds 1 [4Fe-4S] cluster.</text>
</comment>
<comment type="subunit">
    <text evidence="1">NDH-1 is composed of 14 different subunits. Subunits NuoB, C, D, E, F, and G constitute the peripheral sector of the complex.</text>
</comment>
<comment type="subcellular location">
    <subcellularLocation>
        <location evidence="1">Cell inner membrane</location>
        <topology evidence="1">Peripheral membrane protein</topology>
        <orientation evidence="1">Cytoplasmic side</orientation>
    </subcellularLocation>
</comment>
<comment type="similarity">
    <text evidence="1">Belongs to the complex I 20 kDa subunit family.</text>
</comment>